<evidence type="ECO:0000250" key="1"/>
<evidence type="ECO:0000305" key="2"/>
<organism>
    <name type="scientific">Plasmodium falciparum (isolate 3D7)</name>
    <dbReference type="NCBI Taxonomy" id="36329"/>
    <lineage>
        <taxon>Eukaryota</taxon>
        <taxon>Sar</taxon>
        <taxon>Alveolata</taxon>
        <taxon>Apicomplexa</taxon>
        <taxon>Aconoidasida</taxon>
        <taxon>Haemosporida</taxon>
        <taxon>Plasmodiidae</taxon>
        <taxon>Plasmodium</taxon>
        <taxon>Plasmodium (Laverania)</taxon>
    </lineage>
</organism>
<comment type="function">
    <text evidence="1">DNA-dependent RNA polymerase catalyzes the transcription of DNA into RNA using the four ribonucleoside triphosphates as substrates.</text>
</comment>
<comment type="catalytic activity">
    <reaction>
        <text>RNA(n) + a ribonucleoside 5'-triphosphate = RNA(n+1) + diphosphate</text>
        <dbReference type="Rhea" id="RHEA:21248"/>
        <dbReference type="Rhea" id="RHEA-COMP:14527"/>
        <dbReference type="Rhea" id="RHEA-COMP:17342"/>
        <dbReference type="ChEBI" id="CHEBI:33019"/>
        <dbReference type="ChEBI" id="CHEBI:61557"/>
        <dbReference type="ChEBI" id="CHEBI:140395"/>
        <dbReference type="EC" id="2.7.7.6"/>
    </reaction>
</comment>
<comment type="subunit">
    <text evidence="1">In plastids the minimal PEP RNA polymerase catalytic core is composed of four subunits: alpha, beta, beta', and beta''. When a (nuclear-encoded) sigma factor is associated with the core the holoenzyme is formed, which can initiate transcription (By similarity).</text>
</comment>
<comment type="subcellular location">
    <subcellularLocation>
        <location>Plastid</location>
        <location>Apicoplast</location>
    </subcellularLocation>
</comment>
<comment type="similarity">
    <text evidence="2">Belongs to the RNA polymerase beta' chain family.</text>
</comment>
<gene>
    <name type="primary">rpoC1</name>
    <name type="synonym">rpoC</name>
</gene>
<dbReference type="EC" id="2.7.7.6"/>
<dbReference type="EMBL" id="X95275">
    <property type="protein sequence ID" value="CAA64573.1"/>
    <property type="molecule type" value="Genomic_DNA"/>
</dbReference>
<dbReference type="EMBL" id="X52177">
    <property type="protein sequence ID" value="CAA36428.1"/>
    <property type="molecule type" value="Genomic_DNA"/>
</dbReference>
<dbReference type="PIR" id="S10439">
    <property type="entry name" value="S10439"/>
</dbReference>
<dbReference type="PIR" id="S72283">
    <property type="entry name" value="S72283"/>
</dbReference>
<dbReference type="SMR" id="P21422"/>
<dbReference type="FunCoup" id="P21422">
    <property type="interactions" value="2"/>
</dbReference>
<dbReference type="STRING" id="36329.P21422"/>
<dbReference type="VEuPathDB" id="PlasmoDB:PF3D7_API04300"/>
<dbReference type="InParanoid" id="P21422"/>
<dbReference type="OrthoDB" id="35434at2759"/>
<dbReference type="PhylomeDB" id="P21422"/>
<dbReference type="GO" id="GO:0020011">
    <property type="term" value="C:apicoplast"/>
    <property type="evidence" value="ECO:0007669"/>
    <property type="project" value="UniProtKB-SubCell"/>
</dbReference>
<dbReference type="GO" id="GO:0000428">
    <property type="term" value="C:DNA-directed RNA polymerase complex"/>
    <property type="evidence" value="ECO:0007669"/>
    <property type="project" value="UniProtKB-KW"/>
</dbReference>
<dbReference type="GO" id="GO:0005739">
    <property type="term" value="C:mitochondrion"/>
    <property type="evidence" value="ECO:0007669"/>
    <property type="project" value="GOC"/>
</dbReference>
<dbReference type="GO" id="GO:0003677">
    <property type="term" value="F:DNA binding"/>
    <property type="evidence" value="ECO:0007669"/>
    <property type="project" value="InterPro"/>
</dbReference>
<dbReference type="GO" id="GO:0003899">
    <property type="term" value="F:DNA-directed RNA polymerase activity"/>
    <property type="evidence" value="ECO:0007669"/>
    <property type="project" value="UniProtKB-EC"/>
</dbReference>
<dbReference type="GO" id="GO:0006351">
    <property type="term" value="P:DNA-templated transcription"/>
    <property type="evidence" value="ECO:0007669"/>
    <property type="project" value="InterPro"/>
</dbReference>
<dbReference type="Gene3D" id="1.10.40.90">
    <property type="match status" value="1"/>
</dbReference>
<dbReference type="Gene3D" id="2.40.40.20">
    <property type="match status" value="1"/>
</dbReference>
<dbReference type="InterPro" id="IPR045867">
    <property type="entry name" value="DNA-dir_RpoC_beta_prime"/>
</dbReference>
<dbReference type="InterPro" id="IPR000722">
    <property type="entry name" value="RNA_pol_asu"/>
</dbReference>
<dbReference type="InterPro" id="IPR006592">
    <property type="entry name" value="RNA_pol_N"/>
</dbReference>
<dbReference type="InterPro" id="IPR007080">
    <property type="entry name" value="RNA_pol_Rpb1_1"/>
</dbReference>
<dbReference type="PANTHER" id="PTHR19376">
    <property type="entry name" value="DNA-DIRECTED RNA POLYMERASE"/>
    <property type="match status" value="1"/>
</dbReference>
<dbReference type="PANTHER" id="PTHR19376:SF54">
    <property type="entry name" value="DNA-DIRECTED RNA POLYMERASE SUBUNIT BETA"/>
    <property type="match status" value="1"/>
</dbReference>
<dbReference type="Pfam" id="PF04997">
    <property type="entry name" value="RNA_pol_Rpb1_1"/>
    <property type="match status" value="1"/>
</dbReference>
<dbReference type="Pfam" id="PF00623">
    <property type="entry name" value="RNA_pol_Rpb1_2"/>
    <property type="match status" value="2"/>
</dbReference>
<dbReference type="SMART" id="SM00663">
    <property type="entry name" value="RPOLA_N"/>
    <property type="match status" value="1"/>
</dbReference>
<dbReference type="SUPFAM" id="SSF64484">
    <property type="entry name" value="beta and beta-prime subunits of DNA dependent RNA-polymerase"/>
    <property type="match status" value="1"/>
</dbReference>
<accession>P21422</accession>
<proteinExistence type="inferred from homology"/>
<feature type="chain" id="PRO_0000074039" description="DNA-directed RNA polymerase subunit beta'">
    <location>
        <begin position="1"/>
        <end position="575"/>
    </location>
</feature>
<protein>
    <recommendedName>
        <fullName>DNA-directed RNA polymerase subunit beta'</fullName>
        <ecNumber>2.7.7.6</ecNumber>
    </recommendedName>
    <alternativeName>
        <fullName>PEP</fullName>
    </alternativeName>
    <alternativeName>
        <fullName>Plastid-encoded RNA polymerase subunit beta'</fullName>
        <shortName>RNA polymerase subunit beta'</shortName>
    </alternativeName>
</protein>
<name>RPOC1_PLAF7</name>
<sequence length="575" mass="69406">MIIHNNINFIGLKLNILNPKQIIKWSSIFYKNKIIIGEVLIPNTINFNTGLPILNGLFCEKIFDYMYKWNCNCNKKMYNINNFSFFLYCKFCKNKLIININRKYKLGFIFLNIPILHLWYLTGPLKVASLLLNKNVFYLKFLIYYKYFFSNIKYKQYFYYNKLFSKINLYKKKYKNIIQYLFSHNILYKKLQNINLLTELLNNKELLLINNKYYNKKYLYKKINLFNLFILNNIKPNWIFLDLLPILPAGLRPYFYINNSTYIISTINENYRLIILKNNKLKYWLYLRNNIFFIFEIIEKRLLQQLIDYLLINKLILKNNNTFFNFSKTFQGKYSTIKYKLLGKRVDFSGRSVITVNPSIIYNNIGLPYYISINLFKPFLINILKYNSKLNIIFKSLLINKNLFIIQKFLNRLLQNQFIIINRAPTLHRMNLQSFKPLLTEGYSLKFYPLGCTSFNADFDGDQMSIFLPLIKTSKFESNINLNFDKNIISPSNNKNLFSNLQYYKLGINTLLILNYNNELNIFYFNSIEKIYEYYNNNILFIFNLVWIKYINNNNIFYILTSINRIIINLYMYIY</sequence>
<keyword id="KW-0933">Apicoplast</keyword>
<keyword id="KW-0240">DNA-directed RNA polymerase</keyword>
<keyword id="KW-0548">Nucleotidyltransferase</keyword>
<keyword id="KW-0934">Plastid</keyword>
<keyword id="KW-0804">Transcription</keyword>
<keyword id="KW-0808">Transferase</keyword>
<geneLocation type="apicoplast"/>
<reference key="1">
    <citation type="journal article" date="1996" name="J. Mol. Biol.">
        <title>Complete gene map of the plastid-like DNA of the malaria parasite Plasmodium falciparum.</title>
        <authorList>
            <person name="Wilson R.J.M."/>
            <person name="Denny P.W."/>
            <person name="Preiser P.R."/>
            <person name="Rangachari K."/>
            <person name="Roberts K."/>
            <person name="Roy A."/>
            <person name="Whyte A."/>
            <person name="Strath M."/>
            <person name="Moore D.J."/>
            <person name="Moore P.W."/>
            <person name="Williamson D.H."/>
        </authorList>
    </citation>
    <scope>NUCLEOTIDE SEQUENCE [LARGE SCALE GENOMIC DNA]</scope>
    <source>
        <strain>BW/C10</strain>
    </source>
</reference>
<reference key="2">
    <citation type="journal article" date="1991" name="Mol. Biochem. Parasitol.">
        <title>A circular DNA in malaria parasites encodes an RNA polymerase like that of prokaryotes and chloroplasts.</title>
        <authorList>
            <person name="Gardner M.J."/>
            <person name="Williamson D.H."/>
            <person name="Wilson R.J.M."/>
        </authorList>
    </citation>
    <scope>NUCLEOTIDE SEQUENCE [GENOMIC DNA] OF 1-462</scope>
</reference>